<keyword id="KW-0004">4Fe-4S</keyword>
<keyword id="KW-0963">Cytoplasm</keyword>
<keyword id="KW-0408">Iron</keyword>
<keyword id="KW-0411">Iron-sulfur</keyword>
<keyword id="KW-0479">Metal-binding</keyword>
<keyword id="KW-1185">Reference proteome</keyword>
<keyword id="KW-0949">S-adenosyl-L-methionine</keyword>
<keyword id="KW-0808">Transferase</keyword>
<keyword id="KW-0819">tRNA processing</keyword>
<dbReference type="EC" id="2.8.4.3" evidence="1"/>
<dbReference type="EMBL" id="CP000480">
    <property type="protein sequence ID" value="ABK73306.1"/>
    <property type="molecule type" value="Genomic_DNA"/>
</dbReference>
<dbReference type="EMBL" id="CP001663">
    <property type="protein sequence ID" value="AFP39130.1"/>
    <property type="molecule type" value="Genomic_DNA"/>
</dbReference>
<dbReference type="RefSeq" id="WP_011728547.1">
    <property type="nucleotide sequence ID" value="NZ_SIJM01000032.1"/>
</dbReference>
<dbReference type="RefSeq" id="YP_887063.1">
    <property type="nucleotide sequence ID" value="NC_008596.1"/>
</dbReference>
<dbReference type="SMR" id="A0QVX5"/>
<dbReference type="STRING" id="246196.MSMEG_2729"/>
<dbReference type="PaxDb" id="246196-MSMEI_2662"/>
<dbReference type="GeneID" id="93457512"/>
<dbReference type="KEGG" id="msb:LJ00_13570"/>
<dbReference type="KEGG" id="msg:MSMEI_2662"/>
<dbReference type="KEGG" id="msm:MSMEG_2729"/>
<dbReference type="PATRIC" id="fig|246196.19.peg.2696"/>
<dbReference type="eggNOG" id="COG0621">
    <property type="taxonomic scope" value="Bacteria"/>
</dbReference>
<dbReference type="OrthoDB" id="9805215at2"/>
<dbReference type="Proteomes" id="UP000000757">
    <property type="component" value="Chromosome"/>
</dbReference>
<dbReference type="Proteomes" id="UP000006158">
    <property type="component" value="Chromosome"/>
</dbReference>
<dbReference type="GO" id="GO:0005829">
    <property type="term" value="C:cytosol"/>
    <property type="evidence" value="ECO:0007669"/>
    <property type="project" value="TreeGrafter"/>
</dbReference>
<dbReference type="GO" id="GO:0051539">
    <property type="term" value="F:4 iron, 4 sulfur cluster binding"/>
    <property type="evidence" value="ECO:0007669"/>
    <property type="project" value="UniProtKB-UniRule"/>
</dbReference>
<dbReference type="GO" id="GO:0046872">
    <property type="term" value="F:metal ion binding"/>
    <property type="evidence" value="ECO:0007669"/>
    <property type="project" value="UniProtKB-KW"/>
</dbReference>
<dbReference type="GO" id="GO:0035597">
    <property type="term" value="F:N6-isopentenyladenosine methylthiotransferase activity"/>
    <property type="evidence" value="ECO:0007669"/>
    <property type="project" value="TreeGrafter"/>
</dbReference>
<dbReference type="CDD" id="cd01335">
    <property type="entry name" value="Radical_SAM"/>
    <property type="match status" value="1"/>
</dbReference>
<dbReference type="FunFam" id="3.40.50.12160:FF:000003">
    <property type="entry name" value="CDK5 regulatory subunit-associated protein 1"/>
    <property type="match status" value="1"/>
</dbReference>
<dbReference type="FunFam" id="3.80.30.20:FF:000001">
    <property type="entry name" value="tRNA-2-methylthio-N(6)-dimethylallyladenosine synthase 2"/>
    <property type="match status" value="1"/>
</dbReference>
<dbReference type="Gene3D" id="3.40.50.12160">
    <property type="entry name" value="Methylthiotransferase, N-terminal domain"/>
    <property type="match status" value="1"/>
</dbReference>
<dbReference type="Gene3D" id="3.80.30.20">
    <property type="entry name" value="tm_1862 like domain"/>
    <property type="match status" value="1"/>
</dbReference>
<dbReference type="HAMAP" id="MF_01864">
    <property type="entry name" value="tRNA_metthiotr_MiaB"/>
    <property type="match status" value="1"/>
</dbReference>
<dbReference type="InterPro" id="IPR006638">
    <property type="entry name" value="Elp3/MiaA/NifB-like_rSAM"/>
</dbReference>
<dbReference type="InterPro" id="IPR005839">
    <property type="entry name" value="Methylthiotransferase"/>
</dbReference>
<dbReference type="InterPro" id="IPR020612">
    <property type="entry name" value="Methylthiotransferase_CS"/>
</dbReference>
<dbReference type="InterPro" id="IPR013848">
    <property type="entry name" value="Methylthiotransferase_N"/>
</dbReference>
<dbReference type="InterPro" id="IPR038135">
    <property type="entry name" value="Methylthiotransferase_N_sf"/>
</dbReference>
<dbReference type="InterPro" id="IPR006463">
    <property type="entry name" value="MiaB_methiolase"/>
</dbReference>
<dbReference type="InterPro" id="IPR007197">
    <property type="entry name" value="rSAM"/>
</dbReference>
<dbReference type="InterPro" id="IPR023404">
    <property type="entry name" value="rSAM_horseshoe"/>
</dbReference>
<dbReference type="InterPro" id="IPR002792">
    <property type="entry name" value="TRAM_dom"/>
</dbReference>
<dbReference type="NCBIfam" id="TIGR01574">
    <property type="entry name" value="miaB-methiolase"/>
    <property type="match status" value="1"/>
</dbReference>
<dbReference type="NCBIfam" id="TIGR00089">
    <property type="entry name" value="MiaB/RimO family radical SAM methylthiotransferase"/>
    <property type="match status" value="1"/>
</dbReference>
<dbReference type="PANTHER" id="PTHR43020">
    <property type="entry name" value="CDK5 REGULATORY SUBUNIT-ASSOCIATED PROTEIN 1"/>
    <property type="match status" value="1"/>
</dbReference>
<dbReference type="PANTHER" id="PTHR43020:SF2">
    <property type="entry name" value="MITOCHONDRIAL TRNA METHYLTHIOTRANSFERASE CDK5RAP1"/>
    <property type="match status" value="1"/>
</dbReference>
<dbReference type="Pfam" id="PF04055">
    <property type="entry name" value="Radical_SAM"/>
    <property type="match status" value="1"/>
</dbReference>
<dbReference type="Pfam" id="PF00919">
    <property type="entry name" value="UPF0004"/>
    <property type="match status" value="1"/>
</dbReference>
<dbReference type="SFLD" id="SFLDF00273">
    <property type="entry name" value="(dimethylallyl)adenosine_tRNA"/>
    <property type="match status" value="1"/>
</dbReference>
<dbReference type="SFLD" id="SFLDG01082">
    <property type="entry name" value="B12-binding_domain_containing"/>
    <property type="match status" value="1"/>
</dbReference>
<dbReference type="SFLD" id="SFLDS00029">
    <property type="entry name" value="Radical_SAM"/>
    <property type="match status" value="1"/>
</dbReference>
<dbReference type="SMART" id="SM00729">
    <property type="entry name" value="Elp3"/>
    <property type="match status" value="1"/>
</dbReference>
<dbReference type="SUPFAM" id="SSF102114">
    <property type="entry name" value="Radical SAM enzymes"/>
    <property type="match status" value="1"/>
</dbReference>
<dbReference type="PROSITE" id="PS51449">
    <property type="entry name" value="MTTASE_N"/>
    <property type="match status" value="1"/>
</dbReference>
<dbReference type="PROSITE" id="PS01278">
    <property type="entry name" value="MTTASE_RADICAL"/>
    <property type="match status" value="1"/>
</dbReference>
<dbReference type="PROSITE" id="PS51918">
    <property type="entry name" value="RADICAL_SAM"/>
    <property type="match status" value="1"/>
</dbReference>
<dbReference type="PROSITE" id="PS50926">
    <property type="entry name" value="TRAM"/>
    <property type="match status" value="1"/>
</dbReference>
<comment type="function">
    <text evidence="1">Catalyzes the methylthiolation of N6-(dimethylallyl)adenosine (i(6)A), leading to the formation of 2-methylthio-N6-(dimethylallyl)adenosine (ms(2)i(6)A) at position 37 in tRNAs that read codons beginning with uridine.</text>
</comment>
<comment type="catalytic activity">
    <reaction evidence="1">
        <text>N(6)-dimethylallyladenosine(37) in tRNA + (sulfur carrier)-SH + AH2 + 2 S-adenosyl-L-methionine = 2-methylsulfanyl-N(6)-dimethylallyladenosine(37) in tRNA + (sulfur carrier)-H + 5'-deoxyadenosine + L-methionine + A + S-adenosyl-L-homocysteine + 2 H(+)</text>
        <dbReference type="Rhea" id="RHEA:37067"/>
        <dbReference type="Rhea" id="RHEA-COMP:10375"/>
        <dbReference type="Rhea" id="RHEA-COMP:10376"/>
        <dbReference type="Rhea" id="RHEA-COMP:14737"/>
        <dbReference type="Rhea" id="RHEA-COMP:14739"/>
        <dbReference type="ChEBI" id="CHEBI:13193"/>
        <dbReference type="ChEBI" id="CHEBI:15378"/>
        <dbReference type="ChEBI" id="CHEBI:17319"/>
        <dbReference type="ChEBI" id="CHEBI:17499"/>
        <dbReference type="ChEBI" id="CHEBI:29917"/>
        <dbReference type="ChEBI" id="CHEBI:57844"/>
        <dbReference type="ChEBI" id="CHEBI:57856"/>
        <dbReference type="ChEBI" id="CHEBI:59789"/>
        <dbReference type="ChEBI" id="CHEBI:64428"/>
        <dbReference type="ChEBI" id="CHEBI:74415"/>
        <dbReference type="ChEBI" id="CHEBI:74417"/>
        <dbReference type="EC" id="2.8.4.3"/>
    </reaction>
</comment>
<comment type="cofactor">
    <cofactor evidence="1">
        <name>[4Fe-4S] cluster</name>
        <dbReference type="ChEBI" id="CHEBI:49883"/>
    </cofactor>
    <text evidence="1">Binds 2 [4Fe-4S] clusters. One cluster is coordinated with 3 cysteines and an exchangeable S-adenosyl-L-methionine.</text>
</comment>
<comment type="subunit">
    <text evidence="1">Monomer.</text>
</comment>
<comment type="subcellular location">
    <subcellularLocation>
        <location evidence="1">Cytoplasm</location>
    </subcellularLocation>
</comment>
<comment type="similarity">
    <text evidence="1">Belongs to the methylthiotransferase family. MiaB subfamily.</text>
</comment>
<reference key="1">
    <citation type="submission" date="2006-10" db="EMBL/GenBank/DDBJ databases">
        <authorList>
            <person name="Fleischmann R.D."/>
            <person name="Dodson R.J."/>
            <person name="Haft D.H."/>
            <person name="Merkel J.S."/>
            <person name="Nelson W.C."/>
            <person name="Fraser C.M."/>
        </authorList>
    </citation>
    <scope>NUCLEOTIDE SEQUENCE [LARGE SCALE GENOMIC DNA]</scope>
    <source>
        <strain>ATCC 700084 / mc(2)155</strain>
    </source>
</reference>
<reference key="2">
    <citation type="journal article" date="2007" name="Genome Biol.">
        <title>Interrupted coding sequences in Mycobacterium smegmatis: authentic mutations or sequencing errors?</title>
        <authorList>
            <person name="Deshayes C."/>
            <person name="Perrodou E."/>
            <person name="Gallien S."/>
            <person name="Euphrasie D."/>
            <person name="Schaeffer C."/>
            <person name="Van-Dorsselaer A."/>
            <person name="Poch O."/>
            <person name="Lecompte O."/>
            <person name="Reyrat J.-M."/>
        </authorList>
    </citation>
    <scope>NUCLEOTIDE SEQUENCE [LARGE SCALE GENOMIC DNA]</scope>
    <source>
        <strain>ATCC 700084 / mc(2)155</strain>
    </source>
</reference>
<reference key="3">
    <citation type="journal article" date="2009" name="Genome Res.">
        <title>Ortho-proteogenomics: multiple proteomes investigation through orthology and a new MS-based protocol.</title>
        <authorList>
            <person name="Gallien S."/>
            <person name="Perrodou E."/>
            <person name="Carapito C."/>
            <person name="Deshayes C."/>
            <person name="Reyrat J.-M."/>
            <person name="Van Dorsselaer A."/>
            <person name="Poch O."/>
            <person name="Schaeffer C."/>
            <person name="Lecompte O."/>
        </authorList>
    </citation>
    <scope>NUCLEOTIDE SEQUENCE [LARGE SCALE GENOMIC DNA]</scope>
    <source>
        <strain>ATCC 700084 / mc(2)155</strain>
    </source>
</reference>
<accession>A0QVX5</accession>
<accession>I7FC72</accession>
<gene>
    <name evidence="1" type="primary">miaB</name>
    <name type="ordered locus">MSMEG_2729</name>
    <name type="ordered locus">MSMEI_2662</name>
</gene>
<sequence length="512" mass="55517">MVTRDETAEAEGLRPAVGSSRVRTYQVRTYGCQMNVHDSERLSGLLESAGYQRAAEGTDADIVVFNTCAVRENADNKLYGNLSHLAPRKQADPNMQIAVGGCLAQKDRDAVLRRAPWVDVVFGTHNIGSLPTLLERARHNREAQVEIVEALQEFPSALPASRESAYAAWVSISVGCNNTCTFCIVPSLRGKEVDRRPGDILAEVQSLVDQGVLEITLLGQNVNAYGVSFADPELPRDRGAFAKLLRACGGIDGLERVRFTSPHPAEFTDDVIEAMAATPNVCPTLHMPLQSGSDRILKAMRRSYRAERFLGIIDKVRAAIPHAAITTDLIVGFPGETEEDFQATLDVVEQARFAGAFTFQYSKRPGTPAADMPDQLPKSVVTERYQRLIELQERISLEQNREQVGRAVELLVATGEGRKDASTARMSGRARDGRLVHFLPGDNEIRPGDIVTTTVTGAAPHHLIADAPIIERRRTRAGDAHAAGQKPRTGVGLGMPRIGAPAPSATAEGCGC</sequence>
<protein>
    <recommendedName>
        <fullName evidence="1">tRNA-2-methylthio-N(6)-dimethylallyladenosine synthase</fullName>
        <ecNumber evidence="1">2.8.4.3</ecNumber>
    </recommendedName>
    <alternativeName>
        <fullName evidence="1">(Dimethylallyl)adenosine tRNA methylthiotransferase MiaB</fullName>
    </alternativeName>
    <alternativeName>
        <fullName evidence="1">tRNA-i(6)A37 methylthiotransferase</fullName>
    </alternativeName>
</protein>
<feature type="chain" id="PRO_0000374390" description="tRNA-2-methylthio-N(6)-dimethylallyladenosine synthase">
    <location>
        <begin position="1"/>
        <end position="512"/>
    </location>
</feature>
<feature type="domain" description="MTTase N-terminal" evidence="1">
    <location>
        <begin position="23"/>
        <end position="139"/>
    </location>
</feature>
<feature type="domain" description="Radical SAM core" evidence="2">
    <location>
        <begin position="162"/>
        <end position="398"/>
    </location>
</feature>
<feature type="domain" description="TRAM" evidence="1">
    <location>
        <begin position="401"/>
        <end position="469"/>
    </location>
</feature>
<feature type="region of interest" description="Disordered" evidence="3">
    <location>
        <begin position="477"/>
        <end position="512"/>
    </location>
</feature>
<feature type="binding site" evidence="1">
    <location>
        <position position="32"/>
    </location>
    <ligand>
        <name>[4Fe-4S] cluster</name>
        <dbReference type="ChEBI" id="CHEBI:49883"/>
        <label>1</label>
    </ligand>
</feature>
<feature type="binding site" evidence="1">
    <location>
        <position position="68"/>
    </location>
    <ligand>
        <name>[4Fe-4S] cluster</name>
        <dbReference type="ChEBI" id="CHEBI:49883"/>
        <label>1</label>
    </ligand>
</feature>
<feature type="binding site" evidence="1">
    <location>
        <position position="102"/>
    </location>
    <ligand>
        <name>[4Fe-4S] cluster</name>
        <dbReference type="ChEBI" id="CHEBI:49883"/>
        <label>1</label>
    </ligand>
</feature>
<feature type="binding site" evidence="1">
    <location>
        <position position="176"/>
    </location>
    <ligand>
        <name>[4Fe-4S] cluster</name>
        <dbReference type="ChEBI" id="CHEBI:49883"/>
        <label>2</label>
        <note>4Fe-4S-S-AdoMet</note>
    </ligand>
</feature>
<feature type="binding site" evidence="1">
    <location>
        <position position="180"/>
    </location>
    <ligand>
        <name>[4Fe-4S] cluster</name>
        <dbReference type="ChEBI" id="CHEBI:49883"/>
        <label>2</label>
        <note>4Fe-4S-S-AdoMet</note>
    </ligand>
</feature>
<feature type="binding site" evidence="1">
    <location>
        <position position="183"/>
    </location>
    <ligand>
        <name>[4Fe-4S] cluster</name>
        <dbReference type="ChEBI" id="CHEBI:49883"/>
        <label>2</label>
        <note>4Fe-4S-S-AdoMet</note>
    </ligand>
</feature>
<organism>
    <name type="scientific">Mycolicibacterium smegmatis (strain ATCC 700084 / mc(2)155)</name>
    <name type="common">Mycobacterium smegmatis</name>
    <dbReference type="NCBI Taxonomy" id="246196"/>
    <lineage>
        <taxon>Bacteria</taxon>
        <taxon>Bacillati</taxon>
        <taxon>Actinomycetota</taxon>
        <taxon>Actinomycetes</taxon>
        <taxon>Mycobacteriales</taxon>
        <taxon>Mycobacteriaceae</taxon>
        <taxon>Mycolicibacterium</taxon>
    </lineage>
</organism>
<proteinExistence type="inferred from homology"/>
<evidence type="ECO:0000255" key="1">
    <source>
        <dbReference type="HAMAP-Rule" id="MF_01864"/>
    </source>
</evidence>
<evidence type="ECO:0000255" key="2">
    <source>
        <dbReference type="PROSITE-ProRule" id="PRU01266"/>
    </source>
</evidence>
<evidence type="ECO:0000256" key="3">
    <source>
        <dbReference type="SAM" id="MobiDB-lite"/>
    </source>
</evidence>
<name>MIAB_MYCS2</name>